<sequence>MNEQQRLASQQANASTKKEEKDYSKYFEHVYQPPSLKDAKKRGKEQVKIERDFGLPEEFRNFGKGRKFYIRTYGCQMNEHDTEVMAGIFTTLGYEPTFTTEDADVILLNTCAIRENAENKVFGELGHLKPLKQKNPDLLIGVCGCMSQEESVVNKIMQKHQHVDMVFGTHNIHRLPYILKDAMFSKATVVEVWSKEGDVIENLPKVRRGDIKAWVNIMYGCDKFCTYCIVPYTRGKERSRRPEDIIKEVRHLAANGYKEITLLGQNVNAYGKDFDDLEYGLGDLMDELRKIDIARIRFTTSHPRDFDDHLIEVLGKGGNLVEHIHLPVQSGSTDMLKIMARKYTREQYLELVRKIKKTIPNVVLTTDIIVGFPNETDEQFEETLSLYREVEFDSAFTFIYSPREGTPAAKMKDNIPMEVKKERLQRLNELVNEFSAKKNKKYEGQIVEVLVDGESKNNPDVLAGYTRTNKLVNFVAPKSVIGQLVKVKITEAKTWSLNGELVEEPIEVK</sequence>
<comment type="function">
    <text evidence="1">Catalyzes the methylthiolation of N6-(dimethylallyl)adenosine (i(6)A), leading to the formation of 2-methylthio-N6-(dimethylallyl)adenosine (ms(2)i(6)A) at position 37 in tRNAs that read codons beginning with uridine.</text>
</comment>
<comment type="catalytic activity">
    <reaction evidence="1">
        <text>N(6)-dimethylallyladenosine(37) in tRNA + (sulfur carrier)-SH + AH2 + 2 S-adenosyl-L-methionine = 2-methylsulfanyl-N(6)-dimethylallyladenosine(37) in tRNA + (sulfur carrier)-H + 5'-deoxyadenosine + L-methionine + A + S-adenosyl-L-homocysteine + 2 H(+)</text>
        <dbReference type="Rhea" id="RHEA:37067"/>
        <dbReference type="Rhea" id="RHEA-COMP:10375"/>
        <dbReference type="Rhea" id="RHEA-COMP:10376"/>
        <dbReference type="Rhea" id="RHEA-COMP:14737"/>
        <dbReference type="Rhea" id="RHEA-COMP:14739"/>
        <dbReference type="ChEBI" id="CHEBI:13193"/>
        <dbReference type="ChEBI" id="CHEBI:15378"/>
        <dbReference type="ChEBI" id="CHEBI:17319"/>
        <dbReference type="ChEBI" id="CHEBI:17499"/>
        <dbReference type="ChEBI" id="CHEBI:29917"/>
        <dbReference type="ChEBI" id="CHEBI:57844"/>
        <dbReference type="ChEBI" id="CHEBI:57856"/>
        <dbReference type="ChEBI" id="CHEBI:59789"/>
        <dbReference type="ChEBI" id="CHEBI:64428"/>
        <dbReference type="ChEBI" id="CHEBI:74415"/>
        <dbReference type="ChEBI" id="CHEBI:74417"/>
        <dbReference type="EC" id="2.8.4.3"/>
    </reaction>
</comment>
<comment type="cofactor">
    <cofactor evidence="1">
        <name>[4Fe-4S] cluster</name>
        <dbReference type="ChEBI" id="CHEBI:49883"/>
    </cofactor>
    <text evidence="1">Binds 2 [4Fe-4S] clusters. One cluster is coordinated with 3 cysteines and an exchangeable S-adenosyl-L-methionine.</text>
</comment>
<comment type="subunit">
    <text evidence="1">Monomer.</text>
</comment>
<comment type="subcellular location">
    <subcellularLocation>
        <location evidence="1">Cytoplasm</location>
    </subcellularLocation>
</comment>
<comment type="similarity">
    <text evidence="1">Belongs to the methylthiotransferase family. MiaB subfamily.</text>
</comment>
<dbReference type="EC" id="2.8.4.3" evidence="1"/>
<dbReference type="EMBL" id="CP000764">
    <property type="protein sequence ID" value="ABS22660.1"/>
    <property type="molecule type" value="Genomic_DNA"/>
</dbReference>
<dbReference type="RefSeq" id="WP_012094859.1">
    <property type="nucleotide sequence ID" value="NC_009674.1"/>
</dbReference>
<dbReference type="SMR" id="A7GRA2"/>
<dbReference type="STRING" id="315749.Bcer98_2424"/>
<dbReference type="GeneID" id="33897679"/>
<dbReference type="KEGG" id="bcy:Bcer98_2424"/>
<dbReference type="eggNOG" id="COG0621">
    <property type="taxonomic scope" value="Bacteria"/>
</dbReference>
<dbReference type="HOGENOM" id="CLU_018697_2_0_9"/>
<dbReference type="OrthoDB" id="9805215at2"/>
<dbReference type="Proteomes" id="UP000002300">
    <property type="component" value="Chromosome"/>
</dbReference>
<dbReference type="GO" id="GO:0005829">
    <property type="term" value="C:cytosol"/>
    <property type="evidence" value="ECO:0007669"/>
    <property type="project" value="TreeGrafter"/>
</dbReference>
<dbReference type="GO" id="GO:0051539">
    <property type="term" value="F:4 iron, 4 sulfur cluster binding"/>
    <property type="evidence" value="ECO:0007669"/>
    <property type="project" value="UniProtKB-UniRule"/>
</dbReference>
<dbReference type="GO" id="GO:0046872">
    <property type="term" value="F:metal ion binding"/>
    <property type="evidence" value="ECO:0007669"/>
    <property type="project" value="UniProtKB-KW"/>
</dbReference>
<dbReference type="GO" id="GO:0035597">
    <property type="term" value="F:N6-isopentenyladenosine methylthiotransferase activity"/>
    <property type="evidence" value="ECO:0007669"/>
    <property type="project" value="TreeGrafter"/>
</dbReference>
<dbReference type="CDD" id="cd01335">
    <property type="entry name" value="Radical_SAM"/>
    <property type="match status" value="1"/>
</dbReference>
<dbReference type="FunFam" id="3.40.50.12160:FF:000006">
    <property type="entry name" value="tRNA-2-methylthio-N(6)-dimethylallyladenosine synthase"/>
    <property type="match status" value="1"/>
</dbReference>
<dbReference type="FunFam" id="3.80.30.20:FF:000001">
    <property type="entry name" value="tRNA-2-methylthio-N(6)-dimethylallyladenosine synthase 2"/>
    <property type="match status" value="1"/>
</dbReference>
<dbReference type="Gene3D" id="3.40.50.12160">
    <property type="entry name" value="Methylthiotransferase, N-terminal domain"/>
    <property type="match status" value="1"/>
</dbReference>
<dbReference type="Gene3D" id="3.80.30.20">
    <property type="entry name" value="tm_1862 like domain"/>
    <property type="match status" value="1"/>
</dbReference>
<dbReference type="HAMAP" id="MF_01864">
    <property type="entry name" value="tRNA_metthiotr_MiaB"/>
    <property type="match status" value="1"/>
</dbReference>
<dbReference type="InterPro" id="IPR006638">
    <property type="entry name" value="Elp3/MiaA/NifB-like_rSAM"/>
</dbReference>
<dbReference type="InterPro" id="IPR005839">
    <property type="entry name" value="Methylthiotransferase"/>
</dbReference>
<dbReference type="InterPro" id="IPR020612">
    <property type="entry name" value="Methylthiotransferase_CS"/>
</dbReference>
<dbReference type="InterPro" id="IPR013848">
    <property type="entry name" value="Methylthiotransferase_N"/>
</dbReference>
<dbReference type="InterPro" id="IPR038135">
    <property type="entry name" value="Methylthiotransferase_N_sf"/>
</dbReference>
<dbReference type="InterPro" id="IPR006463">
    <property type="entry name" value="MiaB_methiolase"/>
</dbReference>
<dbReference type="InterPro" id="IPR007197">
    <property type="entry name" value="rSAM"/>
</dbReference>
<dbReference type="InterPro" id="IPR023404">
    <property type="entry name" value="rSAM_horseshoe"/>
</dbReference>
<dbReference type="InterPro" id="IPR002792">
    <property type="entry name" value="TRAM_dom"/>
</dbReference>
<dbReference type="NCBIfam" id="TIGR01574">
    <property type="entry name" value="miaB-methiolase"/>
    <property type="match status" value="1"/>
</dbReference>
<dbReference type="NCBIfam" id="TIGR00089">
    <property type="entry name" value="MiaB/RimO family radical SAM methylthiotransferase"/>
    <property type="match status" value="1"/>
</dbReference>
<dbReference type="PANTHER" id="PTHR43020">
    <property type="entry name" value="CDK5 REGULATORY SUBUNIT-ASSOCIATED PROTEIN 1"/>
    <property type="match status" value="1"/>
</dbReference>
<dbReference type="PANTHER" id="PTHR43020:SF2">
    <property type="entry name" value="MITOCHONDRIAL TRNA METHYLTHIOTRANSFERASE CDK5RAP1"/>
    <property type="match status" value="1"/>
</dbReference>
<dbReference type="Pfam" id="PF04055">
    <property type="entry name" value="Radical_SAM"/>
    <property type="match status" value="1"/>
</dbReference>
<dbReference type="Pfam" id="PF01938">
    <property type="entry name" value="TRAM"/>
    <property type="match status" value="1"/>
</dbReference>
<dbReference type="Pfam" id="PF00919">
    <property type="entry name" value="UPF0004"/>
    <property type="match status" value="1"/>
</dbReference>
<dbReference type="SFLD" id="SFLDF00273">
    <property type="entry name" value="(dimethylallyl)adenosine_tRNA"/>
    <property type="match status" value="1"/>
</dbReference>
<dbReference type="SFLD" id="SFLDG01082">
    <property type="entry name" value="B12-binding_domain_containing"/>
    <property type="match status" value="1"/>
</dbReference>
<dbReference type="SFLD" id="SFLDG01061">
    <property type="entry name" value="methylthiotransferase"/>
    <property type="match status" value="1"/>
</dbReference>
<dbReference type="SMART" id="SM00729">
    <property type="entry name" value="Elp3"/>
    <property type="match status" value="1"/>
</dbReference>
<dbReference type="SUPFAM" id="SSF102114">
    <property type="entry name" value="Radical SAM enzymes"/>
    <property type="match status" value="1"/>
</dbReference>
<dbReference type="PROSITE" id="PS51449">
    <property type="entry name" value="MTTASE_N"/>
    <property type="match status" value="1"/>
</dbReference>
<dbReference type="PROSITE" id="PS01278">
    <property type="entry name" value="MTTASE_RADICAL"/>
    <property type="match status" value="1"/>
</dbReference>
<dbReference type="PROSITE" id="PS51918">
    <property type="entry name" value="RADICAL_SAM"/>
    <property type="match status" value="1"/>
</dbReference>
<dbReference type="PROSITE" id="PS50926">
    <property type="entry name" value="TRAM"/>
    <property type="match status" value="1"/>
</dbReference>
<keyword id="KW-0004">4Fe-4S</keyword>
<keyword id="KW-0963">Cytoplasm</keyword>
<keyword id="KW-0408">Iron</keyword>
<keyword id="KW-0411">Iron-sulfur</keyword>
<keyword id="KW-0479">Metal-binding</keyword>
<keyword id="KW-0949">S-adenosyl-L-methionine</keyword>
<keyword id="KW-0808">Transferase</keyword>
<keyword id="KW-0819">tRNA processing</keyword>
<reference key="1">
    <citation type="journal article" date="2008" name="Chem. Biol. Interact.">
        <title>Extending the Bacillus cereus group genomics to putative food-borne pathogens of different toxicity.</title>
        <authorList>
            <person name="Lapidus A."/>
            <person name="Goltsman E."/>
            <person name="Auger S."/>
            <person name="Galleron N."/>
            <person name="Segurens B."/>
            <person name="Dossat C."/>
            <person name="Land M.L."/>
            <person name="Broussolle V."/>
            <person name="Brillard J."/>
            <person name="Guinebretiere M.-H."/>
            <person name="Sanchis V."/>
            <person name="Nguen-the C."/>
            <person name="Lereclus D."/>
            <person name="Richardson P."/>
            <person name="Wincker P."/>
            <person name="Weissenbach J."/>
            <person name="Ehrlich S.D."/>
            <person name="Sorokin A."/>
        </authorList>
    </citation>
    <scope>NUCLEOTIDE SEQUENCE [LARGE SCALE GENOMIC DNA]</scope>
    <source>
        <strain>DSM 22905 / CIP 110041 / 391-98 / NVH 391-98</strain>
    </source>
</reference>
<accession>A7GRA2</accession>
<feature type="chain" id="PRO_0000374132" description="tRNA-2-methylthio-N(6)-dimethylallyladenosine synthase">
    <location>
        <begin position="1"/>
        <end position="509"/>
    </location>
</feature>
<feature type="domain" description="MTTase N-terminal" evidence="1">
    <location>
        <begin position="66"/>
        <end position="184"/>
    </location>
</feature>
<feature type="domain" description="Radical SAM core" evidence="2">
    <location>
        <begin position="207"/>
        <end position="437"/>
    </location>
</feature>
<feature type="domain" description="TRAM" evidence="1">
    <location>
        <begin position="440"/>
        <end position="503"/>
    </location>
</feature>
<feature type="region of interest" description="Disordered" evidence="3">
    <location>
        <begin position="1"/>
        <end position="22"/>
    </location>
</feature>
<feature type="compositionally biased region" description="Polar residues" evidence="3">
    <location>
        <begin position="1"/>
        <end position="15"/>
    </location>
</feature>
<feature type="binding site" evidence="1">
    <location>
        <position position="75"/>
    </location>
    <ligand>
        <name>[4Fe-4S] cluster</name>
        <dbReference type="ChEBI" id="CHEBI:49883"/>
        <label>1</label>
    </ligand>
</feature>
<feature type="binding site" evidence="1">
    <location>
        <position position="111"/>
    </location>
    <ligand>
        <name>[4Fe-4S] cluster</name>
        <dbReference type="ChEBI" id="CHEBI:49883"/>
        <label>1</label>
    </ligand>
</feature>
<feature type="binding site" evidence="1">
    <location>
        <position position="145"/>
    </location>
    <ligand>
        <name>[4Fe-4S] cluster</name>
        <dbReference type="ChEBI" id="CHEBI:49883"/>
        <label>1</label>
    </ligand>
</feature>
<feature type="binding site" evidence="1">
    <location>
        <position position="221"/>
    </location>
    <ligand>
        <name>[4Fe-4S] cluster</name>
        <dbReference type="ChEBI" id="CHEBI:49883"/>
        <label>2</label>
        <note>4Fe-4S-S-AdoMet</note>
    </ligand>
</feature>
<feature type="binding site" evidence="1">
    <location>
        <position position="225"/>
    </location>
    <ligand>
        <name>[4Fe-4S] cluster</name>
        <dbReference type="ChEBI" id="CHEBI:49883"/>
        <label>2</label>
        <note>4Fe-4S-S-AdoMet</note>
    </ligand>
</feature>
<feature type="binding site" evidence="1">
    <location>
        <position position="228"/>
    </location>
    <ligand>
        <name>[4Fe-4S] cluster</name>
        <dbReference type="ChEBI" id="CHEBI:49883"/>
        <label>2</label>
        <note>4Fe-4S-S-AdoMet</note>
    </ligand>
</feature>
<proteinExistence type="inferred from homology"/>
<name>MIAB_BACCN</name>
<evidence type="ECO:0000255" key="1">
    <source>
        <dbReference type="HAMAP-Rule" id="MF_01864"/>
    </source>
</evidence>
<evidence type="ECO:0000255" key="2">
    <source>
        <dbReference type="PROSITE-ProRule" id="PRU01266"/>
    </source>
</evidence>
<evidence type="ECO:0000256" key="3">
    <source>
        <dbReference type="SAM" id="MobiDB-lite"/>
    </source>
</evidence>
<protein>
    <recommendedName>
        <fullName evidence="1">tRNA-2-methylthio-N(6)-dimethylallyladenosine synthase</fullName>
        <ecNumber evidence="1">2.8.4.3</ecNumber>
    </recommendedName>
    <alternativeName>
        <fullName evidence="1">(Dimethylallyl)adenosine tRNA methylthiotransferase MiaB</fullName>
    </alternativeName>
    <alternativeName>
        <fullName evidence="1">tRNA-i(6)A37 methylthiotransferase</fullName>
    </alternativeName>
</protein>
<gene>
    <name evidence="1" type="primary">miaB</name>
    <name type="ordered locus">Bcer98_2424</name>
</gene>
<organism>
    <name type="scientific">Bacillus cytotoxicus (strain DSM 22905 / CIP 110041 / 391-98 / NVH 391-98)</name>
    <dbReference type="NCBI Taxonomy" id="315749"/>
    <lineage>
        <taxon>Bacteria</taxon>
        <taxon>Bacillati</taxon>
        <taxon>Bacillota</taxon>
        <taxon>Bacilli</taxon>
        <taxon>Bacillales</taxon>
        <taxon>Bacillaceae</taxon>
        <taxon>Bacillus</taxon>
        <taxon>Bacillus cereus group</taxon>
    </lineage>
</organism>